<sequence>VTVGHVF</sequence>
<evidence type="ECO:0000269" key="1">
    <source>
    </source>
</evidence>
<evidence type="ECO:0000303" key="2">
    <source>
    </source>
</evidence>
<evidence type="ECO:0000305" key="3"/>
<comment type="subcellular location">
    <subcellularLocation>
        <location evidence="1">Secreted</location>
        <location evidence="1">Cell wall</location>
    </subcellularLocation>
</comment>
<protein>
    <recommendedName>
        <fullName>10 kDa cell wall protein</fullName>
    </recommendedName>
</protein>
<organism>
    <name type="scientific">Nicotiana tabacum</name>
    <name type="common">Common tobacco</name>
    <dbReference type="NCBI Taxonomy" id="4097"/>
    <lineage>
        <taxon>Eukaryota</taxon>
        <taxon>Viridiplantae</taxon>
        <taxon>Streptophyta</taxon>
        <taxon>Embryophyta</taxon>
        <taxon>Tracheophyta</taxon>
        <taxon>Spermatophyta</taxon>
        <taxon>Magnoliopsida</taxon>
        <taxon>eudicotyledons</taxon>
        <taxon>Gunneridae</taxon>
        <taxon>Pentapetalae</taxon>
        <taxon>asterids</taxon>
        <taxon>lamiids</taxon>
        <taxon>Solanales</taxon>
        <taxon>Solanaceae</taxon>
        <taxon>Nicotianoideae</taxon>
        <taxon>Nicotianeae</taxon>
        <taxon>Nicotiana</taxon>
    </lineage>
</organism>
<keyword id="KW-0134">Cell wall</keyword>
<keyword id="KW-0903">Direct protein sequencing</keyword>
<keyword id="KW-1185">Reference proteome</keyword>
<keyword id="KW-0964">Secreted</keyword>
<name>CWP37_TOBAC</name>
<dbReference type="Proteomes" id="UP000084051">
    <property type="component" value="Unplaced"/>
</dbReference>
<dbReference type="GO" id="GO:0005576">
    <property type="term" value="C:extracellular region"/>
    <property type="evidence" value="ECO:0007669"/>
    <property type="project" value="UniProtKB-KW"/>
</dbReference>
<reference evidence="3" key="1">
    <citation type="journal article" date="2001" name="Planta">
        <title>Proteomic analysis reveals a novel set of cell wall proteins in a transformed tobacco cell culture that synthesises secondary walls as determined by biochemical and morphological parameters.</title>
        <authorList>
            <person name="Blee K.A."/>
            <person name="Wheatley E.R."/>
            <person name="Bonham V.A."/>
            <person name="Mitchell G.P."/>
            <person name="Robertson D."/>
            <person name="Slabas A.R."/>
            <person name="Burrell M.M."/>
            <person name="Wojtaszek P."/>
            <person name="Bolwell G.P."/>
        </authorList>
    </citation>
    <scope>PROTEIN SEQUENCE</scope>
    <scope>SUBCELLULAR LOCATION</scope>
    <source>
        <strain evidence="1">cv. Petit Havana</strain>
    </source>
</reference>
<accession>P82445</accession>
<feature type="chain" id="PRO_0000079727" description="10 kDa cell wall protein">
    <location>
        <begin position="1"/>
        <end position="7" status="greater than"/>
    </location>
</feature>
<feature type="non-terminal residue" evidence="2">
    <location>
        <position position="7"/>
    </location>
</feature>
<proteinExistence type="evidence at protein level"/>